<comment type="function">
    <text evidence="1">Negatively regulates transcription of bacterial ribonucleotide reductase nrd genes and operons by binding to NrdR-boxes.</text>
</comment>
<comment type="cofactor">
    <cofactor evidence="1">
        <name>Zn(2+)</name>
        <dbReference type="ChEBI" id="CHEBI:29105"/>
    </cofactor>
    <text evidence="1">Binds 1 zinc ion.</text>
</comment>
<comment type="similarity">
    <text evidence="1">Belongs to the NrdR family.</text>
</comment>
<reference key="1">
    <citation type="journal article" date="2007" name="J. Bacteriol.">
        <title>The complete genome sequence of the lactic acid bacterial paradigm Lactococcus lactis subsp. cremoris MG1363.</title>
        <authorList>
            <person name="Wegmann U."/>
            <person name="O'Connell-Motherway M."/>
            <person name="Zomer A."/>
            <person name="Buist G."/>
            <person name="Shearman C."/>
            <person name="Canchaya C."/>
            <person name="Ventura M."/>
            <person name="Goesmann A."/>
            <person name="Gasson M.J."/>
            <person name="Kuipers O.P."/>
            <person name="van Sinderen D."/>
            <person name="Kok J."/>
        </authorList>
    </citation>
    <scope>NUCLEOTIDE SEQUENCE [LARGE SCALE GENOMIC DNA]</scope>
    <source>
        <strain>MG1363</strain>
    </source>
</reference>
<gene>
    <name evidence="1" type="primary">nrdR</name>
    <name type="ordered locus">llmg_1810</name>
</gene>
<keyword id="KW-0067">ATP-binding</keyword>
<keyword id="KW-0238">DNA-binding</keyword>
<keyword id="KW-0479">Metal-binding</keyword>
<keyword id="KW-0547">Nucleotide-binding</keyword>
<keyword id="KW-0678">Repressor</keyword>
<keyword id="KW-0804">Transcription</keyword>
<keyword id="KW-0805">Transcription regulation</keyword>
<keyword id="KW-0862">Zinc</keyword>
<keyword id="KW-0863">Zinc-finger</keyword>
<sequence>MRCPKCSSEESKVVDSRQAEDAIRRRRVCESCGFRFTTFERIEEMPLLVIKKDDKREPFNREKIVRGLVRSAYKRPVSSEDIETTVANVERKIRQLDSNEVESDVIGEFVMQELAELDDITYIRFASVYRSFKDVSELEELLKNITKK</sequence>
<name>NRDR_LACLM</name>
<organism>
    <name type="scientific">Lactococcus lactis subsp. cremoris (strain MG1363)</name>
    <dbReference type="NCBI Taxonomy" id="416870"/>
    <lineage>
        <taxon>Bacteria</taxon>
        <taxon>Bacillati</taxon>
        <taxon>Bacillota</taxon>
        <taxon>Bacilli</taxon>
        <taxon>Lactobacillales</taxon>
        <taxon>Streptococcaceae</taxon>
        <taxon>Lactococcus</taxon>
        <taxon>Lactococcus cremoris subsp. cremoris</taxon>
    </lineage>
</organism>
<proteinExistence type="inferred from homology"/>
<protein>
    <recommendedName>
        <fullName evidence="1">Transcriptional repressor NrdR</fullName>
    </recommendedName>
</protein>
<evidence type="ECO:0000255" key="1">
    <source>
        <dbReference type="HAMAP-Rule" id="MF_00440"/>
    </source>
</evidence>
<accession>A2RM54</accession>
<feature type="chain" id="PRO_1000080767" description="Transcriptional repressor NrdR">
    <location>
        <begin position="1"/>
        <end position="148"/>
    </location>
</feature>
<feature type="domain" description="ATP-cone" evidence="1">
    <location>
        <begin position="47"/>
        <end position="137"/>
    </location>
</feature>
<feature type="zinc finger region" evidence="1">
    <location>
        <begin position="3"/>
        <end position="32"/>
    </location>
</feature>
<dbReference type="EMBL" id="AM406671">
    <property type="protein sequence ID" value="CAL98381.1"/>
    <property type="molecule type" value="Genomic_DNA"/>
</dbReference>
<dbReference type="RefSeq" id="WP_003132469.1">
    <property type="nucleotide sequence ID" value="NZ_WJVF01000003.1"/>
</dbReference>
<dbReference type="SMR" id="A2RM54"/>
<dbReference type="STRING" id="416870.llmg_1810"/>
<dbReference type="GeneID" id="89632883"/>
<dbReference type="KEGG" id="llm:llmg_1810"/>
<dbReference type="eggNOG" id="COG1327">
    <property type="taxonomic scope" value="Bacteria"/>
</dbReference>
<dbReference type="HOGENOM" id="CLU_108412_0_0_9"/>
<dbReference type="OrthoDB" id="9807461at2"/>
<dbReference type="PhylomeDB" id="A2RM54"/>
<dbReference type="Proteomes" id="UP000000364">
    <property type="component" value="Chromosome"/>
</dbReference>
<dbReference type="GO" id="GO:0005524">
    <property type="term" value="F:ATP binding"/>
    <property type="evidence" value="ECO:0007669"/>
    <property type="project" value="UniProtKB-KW"/>
</dbReference>
<dbReference type="GO" id="GO:0003677">
    <property type="term" value="F:DNA binding"/>
    <property type="evidence" value="ECO:0007669"/>
    <property type="project" value="UniProtKB-KW"/>
</dbReference>
<dbReference type="GO" id="GO:0008270">
    <property type="term" value="F:zinc ion binding"/>
    <property type="evidence" value="ECO:0007669"/>
    <property type="project" value="UniProtKB-KW"/>
</dbReference>
<dbReference type="GO" id="GO:0045892">
    <property type="term" value="P:negative regulation of DNA-templated transcription"/>
    <property type="evidence" value="ECO:0007669"/>
    <property type="project" value="UniProtKB-UniRule"/>
</dbReference>
<dbReference type="HAMAP" id="MF_00440">
    <property type="entry name" value="NrdR"/>
    <property type="match status" value="1"/>
</dbReference>
<dbReference type="InterPro" id="IPR005144">
    <property type="entry name" value="ATP-cone_dom"/>
</dbReference>
<dbReference type="InterPro" id="IPR055173">
    <property type="entry name" value="NrdR-like_N"/>
</dbReference>
<dbReference type="InterPro" id="IPR003796">
    <property type="entry name" value="RNR_NrdR-like"/>
</dbReference>
<dbReference type="NCBIfam" id="TIGR00244">
    <property type="entry name" value="transcriptional regulator NrdR"/>
    <property type="match status" value="1"/>
</dbReference>
<dbReference type="PANTHER" id="PTHR30455">
    <property type="entry name" value="TRANSCRIPTIONAL REPRESSOR NRDR"/>
    <property type="match status" value="1"/>
</dbReference>
<dbReference type="PANTHER" id="PTHR30455:SF2">
    <property type="entry name" value="TRANSCRIPTIONAL REPRESSOR NRDR"/>
    <property type="match status" value="1"/>
</dbReference>
<dbReference type="Pfam" id="PF03477">
    <property type="entry name" value="ATP-cone"/>
    <property type="match status" value="1"/>
</dbReference>
<dbReference type="Pfam" id="PF22811">
    <property type="entry name" value="Zn_ribbon_NrdR"/>
    <property type="match status" value="1"/>
</dbReference>
<dbReference type="PROSITE" id="PS51161">
    <property type="entry name" value="ATP_CONE"/>
    <property type="match status" value="1"/>
</dbReference>